<comment type="function">
    <text evidence="1">The alpha subunit is responsible for the aldol cleavage of indoleglycerol phosphate to indole and glyceraldehyde 3-phosphate.</text>
</comment>
<comment type="catalytic activity">
    <reaction evidence="1">
        <text>(1S,2R)-1-C-(indol-3-yl)glycerol 3-phosphate + L-serine = D-glyceraldehyde 3-phosphate + L-tryptophan + H2O</text>
        <dbReference type="Rhea" id="RHEA:10532"/>
        <dbReference type="ChEBI" id="CHEBI:15377"/>
        <dbReference type="ChEBI" id="CHEBI:33384"/>
        <dbReference type="ChEBI" id="CHEBI:57912"/>
        <dbReference type="ChEBI" id="CHEBI:58866"/>
        <dbReference type="ChEBI" id="CHEBI:59776"/>
        <dbReference type="EC" id="4.2.1.20"/>
    </reaction>
</comment>
<comment type="pathway">
    <text evidence="1">Amino-acid biosynthesis; L-tryptophan biosynthesis; L-tryptophan from chorismate: step 5/5.</text>
</comment>
<comment type="subunit">
    <text evidence="1">Tetramer of two alpha and two beta chains.</text>
</comment>
<comment type="similarity">
    <text evidence="1">Belongs to the TrpA family.</text>
</comment>
<gene>
    <name evidence="1" type="primary">trpA</name>
    <name type="ordered locus">USA300HOU_1308</name>
</gene>
<protein>
    <recommendedName>
        <fullName evidence="1">Tryptophan synthase alpha chain</fullName>
        <ecNumber evidence="1">4.2.1.20</ecNumber>
    </recommendedName>
</protein>
<name>TRPA_STAAT</name>
<feature type="chain" id="PRO_1000076372" description="Tryptophan synthase alpha chain">
    <location>
        <begin position="1"/>
        <end position="242"/>
    </location>
</feature>
<feature type="active site" description="Proton acceptor" evidence="1">
    <location>
        <position position="31"/>
    </location>
</feature>
<feature type="active site" description="Proton acceptor" evidence="1">
    <location>
        <position position="42"/>
    </location>
</feature>
<proteinExistence type="inferred from homology"/>
<sequence>MTKLFIPYIMGNKDLIENATLLSENGADIIEIGVPFSDPVADGPVIMEAGQQAIKQGITIDYIFNQLEKHGDQIKCNYVLMTYYNIICHYGEQAFFEKCRDTGVYGLIIPDLPYELSQRLKQQFSHYGVKIISLVAMTTDDKRIKDIVSHAEGFIYTVTMNATTGQNGAFHPELKRKIESIKAIANVPVVAGFGIRTPQHVADIKEVADGIVIGSEIVKRFKSNTREEIIKYLQSIQQTLNN</sequence>
<keyword id="KW-0028">Amino-acid biosynthesis</keyword>
<keyword id="KW-0057">Aromatic amino acid biosynthesis</keyword>
<keyword id="KW-0456">Lyase</keyword>
<keyword id="KW-0822">Tryptophan biosynthesis</keyword>
<reference key="1">
    <citation type="journal article" date="2007" name="BMC Microbiol.">
        <title>Subtle genetic changes enhance virulence of methicillin resistant and sensitive Staphylococcus aureus.</title>
        <authorList>
            <person name="Highlander S.K."/>
            <person name="Hulten K.G."/>
            <person name="Qin X."/>
            <person name="Jiang H."/>
            <person name="Yerrapragada S."/>
            <person name="Mason E.O. Jr."/>
            <person name="Shang Y."/>
            <person name="Williams T.M."/>
            <person name="Fortunov R.M."/>
            <person name="Liu Y."/>
            <person name="Igboeli O."/>
            <person name="Petrosino J."/>
            <person name="Tirumalai M."/>
            <person name="Uzman A."/>
            <person name="Fox G.E."/>
            <person name="Cardenas A.M."/>
            <person name="Muzny D.M."/>
            <person name="Hemphill L."/>
            <person name="Ding Y."/>
            <person name="Dugan S."/>
            <person name="Blyth P.R."/>
            <person name="Buhay C.J."/>
            <person name="Dinh H.H."/>
            <person name="Hawes A.C."/>
            <person name="Holder M."/>
            <person name="Kovar C.L."/>
            <person name="Lee S.L."/>
            <person name="Liu W."/>
            <person name="Nazareth L.V."/>
            <person name="Wang Q."/>
            <person name="Zhou J."/>
            <person name="Kaplan S.L."/>
            <person name="Weinstock G.M."/>
        </authorList>
    </citation>
    <scope>NUCLEOTIDE SEQUENCE [LARGE SCALE GENOMIC DNA]</scope>
    <source>
        <strain>USA300 / TCH1516</strain>
    </source>
</reference>
<evidence type="ECO:0000255" key="1">
    <source>
        <dbReference type="HAMAP-Rule" id="MF_00131"/>
    </source>
</evidence>
<organism>
    <name type="scientific">Staphylococcus aureus (strain USA300 / TCH1516)</name>
    <dbReference type="NCBI Taxonomy" id="451516"/>
    <lineage>
        <taxon>Bacteria</taxon>
        <taxon>Bacillati</taxon>
        <taxon>Bacillota</taxon>
        <taxon>Bacilli</taxon>
        <taxon>Bacillales</taxon>
        <taxon>Staphylococcaceae</taxon>
        <taxon>Staphylococcus</taxon>
    </lineage>
</organism>
<dbReference type="EC" id="4.2.1.20" evidence="1"/>
<dbReference type="EMBL" id="CP000730">
    <property type="protein sequence ID" value="ABX29320.1"/>
    <property type="molecule type" value="Genomic_DNA"/>
</dbReference>
<dbReference type="RefSeq" id="WP_000163627.1">
    <property type="nucleotide sequence ID" value="NC_010079.1"/>
</dbReference>
<dbReference type="SMR" id="A8Z245"/>
<dbReference type="KEGG" id="sax:USA300HOU_1308"/>
<dbReference type="HOGENOM" id="CLU_016734_0_0_9"/>
<dbReference type="UniPathway" id="UPA00035">
    <property type="reaction ID" value="UER00044"/>
</dbReference>
<dbReference type="GO" id="GO:0005829">
    <property type="term" value="C:cytosol"/>
    <property type="evidence" value="ECO:0007669"/>
    <property type="project" value="TreeGrafter"/>
</dbReference>
<dbReference type="GO" id="GO:0004834">
    <property type="term" value="F:tryptophan synthase activity"/>
    <property type="evidence" value="ECO:0007669"/>
    <property type="project" value="UniProtKB-UniRule"/>
</dbReference>
<dbReference type="CDD" id="cd04724">
    <property type="entry name" value="Tryptophan_synthase_alpha"/>
    <property type="match status" value="1"/>
</dbReference>
<dbReference type="Gene3D" id="3.20.20.70">
    <property type="entry name" value="Aldolase class I"/>
    <property type="match status" value="1"/>
</dbReference>
<dbReference type="HAMAP" id="MF_00131">
    <property type="entry name" value="Trp_synth_alpha"/>
    <property type="match status" value="1"/>
</dbReference>
<dbReference type="InterPro" id="IPR013785">
    <property type="entry name" value="Aldolase_TIM"/>
</dbReference>
<dbReference type="InterPro" id="IPR011060">
    <property type="entry name" value="RibuloseP-bd_barrel"/>
</dbReference>
<dbReference type="InterPro" id="IPR018204">
    <property type="entry name" value="Trp_synthase_alpha_AS"/>
</dbReference>
<dbReference type="InterPro" id="IPR002028">
    <property type="entry name" value="Trp_synthase_suA"/>
</dbReference>
<dbReference type="NCBIfam" id="TIGR00262">
    <property type="entry name" value="trpA"/>
    <property type="match status" value="1"/>
</dbReference>
<dbReference type="PANTHER" id="PTHR43406:SF1">
    <property type="entry name" value="TRYPTOPHAN SYNTHASE ALPHA CHAIN, CHLOROPLASTIC"/>
    <property type="match status" value="1"/>
</dbReference>
<dbReference type="PANTHER" id="PTHR43406">
    <property type="entry name" value="TRYPTOPHAN SYNTHASE, ALPHA CHAIN"/>
    <property type="match status" value="1"/>
</dbReference>
<dbReference type="Pfam" id="PF00290">
    <property type="entry name" value="Trp_syntA"/>
    <property type="match status" value="1"/>
</dbReference>
<dbReference type="SUPFAM" id="SSF51366">
    <property type="entry name" value="Ribulose-phoshate binding barrel"/>
    <property type="match status" value="1"/>
</dbReference>
<dbReference type="PROSITE" id="PS00167">
    <property type="entry name" value="TRP_SYNTHASE_ALPHA"/>
    <property type="match status" value="1"/>
</dbReference>
<accession>A8Z245</accession>